<reference key="1">
    <citation type="submission" date="2007-03" db="EMBL/GenBank/DDBJ databases">
        <authorList>
            <person name="Heidelberg J."/>
        </authorList>
    </citation>
    <scope>NUCLEOTIDE SEQUENCE [LARGE SCALE GENOMIC DNA]</scope>
    <source>
        <strain>ATCC 39541 / Classical Ogawa 395 / O395</strain>
    </source>
</reference>
<reference key="2">
    <citation type="journal article" date="2008" name="PLoS ONE">
        <title>A recalibrated molecular clock and independent origins for the cholera pandemic clones.</title>
        <authorList>
            <person name="Feng L."/>
            <person name="Reeves P.R."/>
            <person name="Lan R."/>
            <person name="Ren Y."/>
            <person name="Gao C."/>
            <person name="Zhou Z."/>
            <person name="Ren Y."/>
            <person name="Cheng J."/>
            <person name="Wang W."/>
            <person name="Wang J."/>
            <person name="Qian W."/>
            <person name="Li D."/>
            <person name="Wang L."/>
        </authorList>
    </citation>
    <scope>NUCLEOTIDE SEQUENCE [LARGE SCALE GENOMIC DNA]</scope>
    <source>
        <strain>ATCC 39541 / Classical Ogawa 395 / O395</strain>
    </source>
</reference>
<name>RL30_VIBC3</name>
<dbReference type="EMBL" id="CP000627">
    <property type="protein sequence ID" value="ABQ20924.1"/>
    <property type="molecule type" value="Genomic_DNA"/>
</dbReference>
<dbReference type="EMBL" id="CP001235">
    <property type="protein sequence ID" value="ACP10677.1"/>
    <property type="molecule type" value="Genomic_DNA"/>
</dbReference>
<dbReference type="RefSeq" id="WP_000201159.1">
    <property type="nucleotide sequence ID" value="NZ_JAACZH010000007.1"/>
</dbReference>
<dbReference type="SMR" id="A5F562"/>
<dbReference type="GeneID" id="96872481"/>
<dbReference type="KEGG" id="vco:VC0395_A2156"/>
<dbReference type="KEGG" id="vcr:VC395_2691"/>
<dbReference type="PATRIC" id="fig|345073.21.peg.2591"/>
<dbReference type="eggNOG" id="COG1841">
    <property type="taxonomic scope" value="Bacteria"/>
</dbReference>
<dbReference type="HOGENOM" id="CLU_131047_1_4_6"/>
<dbReference type="OrthoDB" id="9812790at2"/>
<dbReference type="Proteomes" id="UP000000249">
    <property type="component" value="Chromosome 2"/>
</dbReference>
<dbReference type="GO" id="GO:0022625">
    <property type="term" value="C:cytosolic large ribosomal subunit"/>
    <property type="evidence" value="ECO:0007669"/>
    <property type="project" value="TreeGrafter"/>
</dbReference>
<dbReference type="GO" id="GO:0003735">
    <property type="term" value="F:structural constituent of ribosome"/>
    <property type="evidence" value="ECO:0007669"/>
    <property type="project" value="InterPro"/>
</dbReference>
<dbReference type="GO" id="GO:0006412">
    <property type="term" value="P:translation"/>
    <property type="evidence" value="ECO:0007669"/>
    <property type="project" value="UniProtKB-UniRule"/>
</dbReference>
<dbReference type="CDD" id="cd01658">
    <property type="entry name" value="Ribosomal_L30"/>
    <property type="match status" value="1"/>
</dbReference>
<dbReference type="FunFam" id="3.30.1390.20:FF:000001">
    <property type="entry name" value="50S ribosomal protein L30"/>
    <property type="match status" value="1"/>
</dbReference>
<dbReference type="Gene3D" id="3.30.1390.20">
    <property type="entry name" value="Ribosomal protein L30, ferredoxin-like fold domain"/>
    <property type="match status" value="1"/>
</dbReference>
<dbReference type="HAMAP" id="MF_01371_B">
    <property type="entry name" value="Ribosomal_uL30_B"/>
    <property type="match status" value="1"/>
</dbReference>
<dbReference type="InterPro" id="IPR036919">
    <property type="entry name" value="Ribo_uL30_ferredoxin-like_sf"/>
</dbReference>
<dbReference type="InterPro" id="IPR005996">
    <property type="entry name" value="Ribosomal_uL30_bac-type"/>
</dbReference>
<dbReference type="InterPro" id="IPR018038">
    <property type="entry name" value="Ribosomal_uL30_CS"/>
</dbReference>
<dbReference type="InterPro" id="IPR016082">
    <property type="entry name" value="Ribosomal_uL30_ferredoxin-like"/>
</dbReference>
<dbReference type="NCBIfam" id="TIGR01308">
    <property type="entry name" value="rpmD_bact"/>
    <property type="match status" value="1"/>
</dbReference>
<dbReference type="PANTHER" id="PTHR15892:SF2">
    <property type="entry name" value="LARGE RIBOSOMAL SUBUNIT PROTEIN UL30M"/>
    <property type="match status" value="1"/>
</dbReference>
<dbReference type="PANTHER" id="PTHR15892">
    <property type="entry name" value="MITOCHONDRIAL RIBOSOMAL PROTEIN L30"/>
    <property type="match status" value="1"/>
</dbReference>
<dbReference type="Pfam" id="PF00327">
    <property type="entry name" value="Ribosomal_L30"/>
    <property type="match status" value="1"/>
</dbReference>
<dbReference type="PIRSF" id="PIRSF002211">
    <property type="entry name" value="Ribosomal_L30_bac-type"/>
    <property type="match status" value="1"/>
</dbReference>
<dbReference type="SUPFAM" id="SSF55129">
    <property type="entry name" value="Ribosomal protein L30p/L7e"/>
    <property type="match status" value="1"/>
</dbReference>
<dbReference type="PROSITE" id="PS00634">
    <property type="entry name" value="RIBOSOMAL_L30"/>
    <property type="match status" value="1"/>
</dbReference>
<accession>A5F562</accession>
<accession>C3LXH7</accession>
<sequence>MATIKVTQTKSSIGRLPKHKATLRGLGLRKINHTVELEDTPCVRGMINKVYYMVKVEE</sequence>
<evidence type="ECO:0000255" key="1">
    <source>
        <dbReference type="HAMAP-Rule" id="MF_01371"/>
    </source>
</evidence>
<evidence type="ECO:0000305" key="2"/>
<protein>
    <recommendedName>
        <fullName evidence="1">Large ribosomal subunit protein uL30</fullName>
    </recommendedName>
    <alternativeName>
        <fullName evidence="2">50S ribosomal protein L30</fullName>
    </alternativeName>
</protein>
<feature type="chain" id="PRO_1000073455" description="Large ribosomal subunit protein uL30">
    <location>
        <begin position="1"/>
        <end position="58"/>
    </location>
</feature>
<proteinExistence type="inferred from homology"/>
<gene>
    <name evidence="1" type="primary">rpmD</name>
    <name type="ordered locus">VC0395_A2156</name>
    <name type="ordered locus">VC395_2691</name>
</gene>
<comment type="subunit">
    <text evidence="1">Part of the 50S ribosomal subunit.</text>
</comment>
<comment type="similarity">
    <text evidence="1">Belongs to the universal ribosomal protein uL30 family.</text>
</comment>
<organism>
    <name type="scientific">Vibrio cholerae serotype O1 (strain ATCC 39541 / Classical Ogawa 395 / O395)</name>
    <dbReference type="NCBI Taxonomy" id="345073"/>
    <lineage>
        <taxon>Bacteria</taxon>
        <taxon>Pseudomonadati</taxon>
        <taxon>Pseudomonadota</taxon>
        <taxon>Gammaproteobacteria</taxon>
        <taxon>Vibrionales</taxon>
        <taxon>Vibrionaceae</taxon>
        <taxon>Vibrio</taxon>
    </lineage>
</organism>
<keyword id="KW-0687">Ribonucleoprotein</keyword>
<keyword id="KW-0689">Ribosomal protein</keyword>